<accession>Q0VQU1</accession>
<name>LEXA_ALCBS</name>
<comment type="function">
    <text evidence="1">Represses a number of genes involved in the response to DNA damage (SOS response), including recA and lexA. In the presence of single-stranded DNA, RecA interacts with LexA causing an autocatalytic cleavage which disrupts the DNA-binding part of LexA, leading to derepression of the SOS regulon and eventually DNA repair.</text>
</comment>
<comment type="catalytic activity">
    <reaction evidence="1">
        <text>Hydrolysis of Ala-|-Gly bond in repressor LexA.</text>
        <dbReference type="EC" id="3.4.21.88"/>
    </reaction>
</comment>
<comment type="subunit">
    <text evidence="1">Homodimer.</text>
</comment>
<comment type="similarity">
    <text evidence="1">Belongs to the peptidase S24 family.</text>
</comment>
<sequence length="204" mass="22493">MSSKLTDRQQQVLDCIRECLKDNGMAPTRAEIADIMGFQSKNAASDHLRALERKGYIKLHSDRSRGIQLLDHAYWGEEELPVVGKVAAGIPIEAIENVERTVPVPQGLFKQRPTYLLKVQGDSMVDAGIFDGDLIAVRKSNVARSGEIVVARIDEEVTVKTLKLNKSSATLLPANEAYEPIKVPADQLIIEGIFVGLIRDPNSF</sequence>
<protein>
    <recommendedName>
        <fullName evidence="1">LexA repressor</fullName>
        <ecNumber evidence="1">3.4.21.88</ecNumber>
    </recommendedName>
</protein>
<keyword id="KW-0068">Autocatalytic cleavage</keyword>
<keyword id="KW-0227">DNA damage</keyword>
<keyword id="KW-0234">DNA repair</keyword>
<keyword id="KW-0235">DNA replication</keyword>
<keyword id="KW-0238">DNA-binding</keyword>
<keyword id="KW-0378">Hydrolase</keyword>
<keyword id="KW-1185">Reference proteome</keyword>
<keyword id="KW-0678">Repressor</keyword>
<keyword id="KW-0742">SOS response</keyword>
<keyword id="KW-0804">Transcription</keyword>
<keyword id="KW-0805">Transcription regulation</keyword>
<organism>
    <name type="scientific">Alcanivorax borkumensis (strain ATCC 700651 / DSM 11573 / NCIMB 13689 / SK2)</name>
    <dbReference type="NCBI Taxonomy" id="393595"/>
    <lineage>
        <taxon>Bacteria</taxon>
        <taxon>Pseudomonadati</taxon>
        <taxon>Pseudomonadota</taxon>
        <taxon>Gammaproteobacteria</taxon>
        <taxon>Oceanospirillales</taxon>
        <taxon>Alcanivoracaceae</taxon>
        <taxon>Alcanivorax</taxon>
    </lineage>
</organism>
<evidence type="ECO:0000255" key="1">
    <source>
        <dbReference type="HAMAP-Rule" id="MF_00015"/>
    </source>
</evidence>
<gene>
    <name evidence="1" type="primary">lexA</name>
    <name type="ordered locus">ABO_1009</name>
</gene>
<dbReference type="EC" id="3.4.21.88" evidence="1"/>
<dbReference type="EMBL" id="AM286690">
    <property type="protein sequence ID" value="CAL16457.1"/>
    <property type="molecule type" value="Genomic_DNA"/>
</dbReference>
<dbReference type="RefSeq" id="WP_011588293.1">
    <property type="nucleotide sequence ID" value="NC_008260.1"/>
</dbReference>
<dbReference type="SMR" id="Q0VQU1"/>
<dbReference type="STRING" id="393595.ABO_1009"/>
<dbReference type="MEROPS" id="S24.001"/>
<dbReference type="KEGG" id="abo:ABO_1009"/>
<dbReference type="eggNOG" id="COG1974">
    <property type="taxonomic scope" value="Bacteria"/>
</dbReference>
<dbReference type="HOGENOM" id="CLU_066192_45_3_6"/>
<dbReference type="OrthoDB" id="9802364at2"/>
<dbReference type="Proteomes" id="UP000008871">
    <property type="component" value="Chromosome"/>
</dbReference>
<dbReference type="GO" id="GO:0003677">
    <property type="term" value="F:DNA binding"/>
    <property type="evidence" value="ECO:0007669"/>
    <property type="project" value="UniProtKB-UniRule"/>
</dbReference>
<dbReference type="GO" id="GO:0004252">
    <property type="term" value="F:serine-type endopeptidase activity"/>
    <property type="evidence" value="ECO:0007669"/>
    <property type="project" value="UniProtKB-UniRule"/>
</dbReference>
<dbReference type="GO" id="GO:0006281">
    <property type="term" value="P:DNA repair"/>
    <property type="evidence" value="ECO:0007669"/>
    <property type="project" value="UniProtKB-UniRule"/>
</dbReference>
<dbReference type="GO" id="GO:0006260">
    <property type="term" value="P:DNA replication"/>
    <property type="evidence" value="ECO:0007669"/>
    <property type="project" value="UniProtKB-UniRule"/>
</dbReference>
<dbReference type="GO" id="GO:0045892">
    <property type="term" value="P:negative regulation of DNA-templated transcription"/>
    <property type="evidence" value="ECO:0007669"/>
    <property type="project" value="UniProtKB-UniRule"/>
</dbReference>
<dbReference type="GO" id="GO:0006508">
    <property type="term" value="P:proteolysis"/>
    <property type="evidence" value="ECO:0007669"/>
    <property type="project" value="InterPro"/>
</dbReference>
<dbReference type="GO" id="GO:0009432">
    <property type="term" value="P:SOS response"/>
    <property type="evidence" value="ECO:0007669"/>
    <property type="project" value="UniProtKB-UniRule"/>
</dbReference>
<dbReference type="CDD" id="cd06529">
    <property type="entry name" value="S24_LexA-like"/>
    <property type="match status" value="1"/>
</dbReference>
<dbReference type="FunFam" id="1.10.10.10:FF:000009">
    <property type="entry name" value="LexA repressor"/>
    <property type="match status" value="1"/>
</dbReference>
<dbReference type="FunFam" id="2.10.109.10:FF:000001">
    <property type="entry name" value="LexA repressor"/>
    <property type="match status" value="1"/>
</dbReference>
<dbReference type="Gene3D" id="2.10.109.10">
    <property type="entry name" value="Umud Fragment, subunit A"/>
    <property type="match status" value="1"/>
</dbReference>
<dbReference type="Gene3D" id="1.10.10.10">
    <property type="entry name" value="Winged helix-like DNA-binding domain superfamily/Winged helix DNA-binding domain"/>
    <property type="match status" value="1"/>
</dbReference>
<dbReference type="HAMAP" id="MF_00015">
    <property type="entry name" value="LexA"/>
    <property type="match status" value="1"/>
</dbReference>
<dbReference type="InterPro" id="IPR006200">
    <property type="entry name" value="LexA"/>
</dbReference>
<dbReference type="InterPro" id="IPR039418">
    <property type="entry name" value="LexA-like"/>
</dbReference>
<dbReference type="InterPro" id="IPR036286">
    <property type="entry name" value="LexA/Signal_pep-like_sf"/>
</dbReference>
<dbReference type="InterPro" id="IPR006199">
    <property type="entry name" value="LexA_DNA-bd_dom"/>
</dbReference>
<dbReference type="InterPro" id="IPR050077">
    <property type="entry name" value="LexA_repressor"/>
</dbReference>
<dbReference type="InterPro" id="IPR006197">
    <property type="entry name" value="Peptidase_S24_LexA"/>
</dbReference>
<dbReference type="InterPro" id="IPR015927">
    <property type="entry name" value="Peptidase_S24_S26A/B/C"/>
</dbReference>
<dbReference type="InterPro" id="IPR036388">
    <property type="entry name" value="WH-like_DNA-bd_sf"/>
</dbReference>
<dbReference type="InterPro" id="IPR036390">
    <property type="entry name" value="WH_DNA-bd_sf"/>
</dbReference>
<dbReference type="NCBIfam" id="TIGR00498">
    <property type="entry name" value="lexA"/>
    <property type="match status" value="1"/>
</dbReference>
<dbReference type="PANTHER" id="PTHR33516">
    <property type="entry name" value="LEXA REPRESSOR"/>
    <property type="match status" value="1"/>
</dbReference>
<dbReference type="PANTHER" id="PTHR33516:SF2">
    <property type="entry name" value="LEXA REPRESSOR-RELATED"/>
    <property type="match status" value="1"/>
</dbReference>
<dbReference type="Pfam" id="PF01726">
    <property type="entry name" value="LexA_DNA_bind"/>
    <property type="match status" value="1"/>
</dbReference>
<dbReference type="Pfam" id="PF00717">
    <property type="entry name" value="Peptidase_S24"/>
    <property type="match status" value="1"/>
</dbReference>
<dbReference type="PRINTS" id="PR00726">
    <property type="entry name" value="LEXASERPTASE"/>
</dbReference>
<dbReference type="SUPFAM" id="SSF51306">
    <property type="entry name" value="LexA/Signal peptidase"/>
    <property type="match status" value="1"/>
</dbReference>
<dbReference type="SUPFAM" id="SSF46785">
    <property type="entry name" value="Winged helix' DNA-binding domain"/>
    <property type="match status" value="1"/>
</dbReference>
<feature type="chain" id="PRO_1000001254" description="LexA repressor">
    <location>
        <begin position="1"/>
        <end position="204"/>
    </location>
</feature>
<feature type="DNA-binding region" description="H-T-H motif" evidence="1">
    <location>
        <begin position="29"/>
        <end position="49"/>
    </location>
</feature>
<feature type="active site" description="For autocatalytic cleavage activity" evidence="1">
    <location>
        <position position="123"/>
    </location>
</feature>
<feature type="active site" description="For autocatalytic cleavage activity" evidence="1">
    <location>
        <position position="160"/>
    </location>
</feature>
<feature type="site" description="Cleavage; by autolysis" evidence="1">
    <location>
        <begin position="88"/>
        <end position="89"/>
    </location>
</feature>
<proteinExistence type="inferred from homology"/>
<reference key="1">
    <citation type="journal article" date="2006" name="Nat. Biotechnol.">
        <title>Genome sequence of the ubiquitous hydrocarbon-degrading marine bacterium Alcanivorax borkumensis.</title>
        <authorList>
            <person name="Schneiker S."/>
            <person name="Martins dos Santos V.A.P."/>
            <person name="Bartels D."/>
            <person name="Bekel T."/>
            <person name="Brecht M."/>
            <person name="Buhrmester J."/>
            <person name="Chernikova T.N."/>
            <person name="Denaro R."/>
            <person name="Ferrer M."/>
            <person name="Gertler C."/>
            <person name="Goesmann A."/>
            <person name="Golyshina O.V."/>
            <person name="Kaminski F."/>
            <person name="Khachane A.N."/>
            <person name="Lang S."/>
            <person name="Linke B."/>
            <person name="McHardy A.C."/>
            <person name="Meyer F."/>
            <person name="Nechitaylo T."/>
            <person name="Puehler A."/>
            <person name="Regenhardt D."/>
            <person name="Rupp O."/>
            <person name="Sabirova J.S."/>
            <person name="Selbitschka W."/>
            <person name="Yakimov M.M."/>
            <person name="Timmis K.N."/>
            <person name="Vorhoelter F.-J."/>
            <person name="Weidner S."/>
            <person name="Kaiser O."/>
            <person name="Golyshin P.N."/>
        </authorList>
    </citation>
    <scope>NUCLEOTIDE SEQUENCE [LARGE SCALE GENOMIC DNA]</scope>
    <source>
        <strain>ATCC 700651 / DSM 11573 / NCIMB 13689 / SK2</strain>
    </source>
</reference>